<keyword id="KW-0067">ATP-binding</keyword>
<keyword id="KW-0436">Ligase</keyword>
<keyword id="KW-0460">Magnesium</keyword>
<keyword id="KW-0479">Metal-binding</keyword>
<keyword id="KW-0520">NAD</keyword>
<keyword id="KW-0547">Nucleotide-binding</keyword>
<evidence type="ECO:0000255" key="1">
    <source>
        <dbReference type="HAMAP-Rule" id="MF_00193"/>
    </source>
</evidence>
<reference key="1">
    <citation type="submission" date="2006-04" db="EMBL/GenBank/DDBJ databases">
        <title>Complete sequence of chromosome of Deinococcus geothermalis DSM 11300.</title>
        <authorList>
            <person name="Copeland A."/>
            <person name="Lucas S."/>
            <person name="Lapidus A."/>
            <person name="Barry K."/>
            <person name="Detter J.C."/>
            <person name="Glavina del Rio T."/>
            <person name="Hammon N."/>
            <person name="Israni S."/>
            <person name="Dalin E."/>
            <person name="Tice H."/>
            <person name="Pitluck S."/>
            <person name="Brettin T."/>
            <person name="Bruce D."/>
            <person name="Han C."/>
            <person name="Tapia R."/>
            <person name="Saunders E."/>
            <person name="Gilna P."/>
            <person name="Schmutz J."/>
            <person name="Larimer F."/>
            <person name="Land M."/>
            <person name="Hauser L."/>
            <person name="Kyrpides N."/>
            <person name="Kim E."/>
            <person name="Daly M.J."/>
            <person name="Fredrickson J.K."/>
            <person name="Makarova K.S."/>
            <person name="Gaidamakova E.K."/>
            <person name="Zhai M."/>
            <person name="Richardson P."/>
        </authorList>
    </citation>
    <scope>NUCLEOTIDE SEQUENCE [LARGE SCALE GENOMIC DNA]</scope>
    <source>
        <strain>DSM 11300 / CIP 105573 / AG-3a</strain>
    </source>
</reference>
<comment type="function">
    <text evidence="1">Catalyzes the ATP-dependent amidation of deamido-NAD to form NAD. Uses ammonia as a nitrogen source.</text>
</comment>
<comment type="catalytic activity">
    <reaction evidence="1">
        <text>deamido-NAD(+) + NH4(+) + ATP = AMP + diphosphate + NAD(+) + H(+)</text>
        <dbReference type="Rhea" id="RHEA:21188"/>
        <dbReference type="ChEBI" id="CHEBI:15378"/>
        <dbReference type="ChEBI" id="CHEBI:28938"/>
        <dbReference type="ChEBI" id="CHEBI:30616"/>
        <dbReference type="ChEBI" id="CHEBI:33019"/>
        <dbReference type="ChEBI" id="CHEBI:57540"/>
        <dbReference type="ChEBI" id="CHEBI:58437"/>
        <dbReference type="ChEBI" id="CHEBI:456215"/>
        <dbReference type="EC" id="6.3.1.5"/>
    </reaction>
</comment>
<comment type="pathway">
    <text evidence="1">Cofactor biosynthesis; NAD(+) biosynthesis; NAD(+) from deamido-NAD(+) (ammonia route): step 1/1.</text>
</comment>
<comment type="subunit">
    <text evidence="1">Homodimer.</text>
</comment>
<comment type="similarity">
    <text evidence="1">Belongs to the NAD synthetase family.</text>
</comment>
<name>NADE_DEIGD</name>
<accession>Q1IYR1</accession>
<dbReference type="EC" id="6.3.1.5" evidence="1"/>
<dbReference type="EMBL" id="CP000359">
    <property type="protein sequence ID" value="ABF45623.1"/>
    <property type="molecule type" value="Genomic_DNA"/>
</dbReference>
<dbReference type="RefSeq" id="WP_011530460.1">
    <property type="nucleotide sequence ID" value="NC_008025.1"/>
</dbReference>
<dbReference type="SMR" id="Q1IYR1"/>
<dbReference type="STRING" id="319795.Dgeo_1327"/>
<dbReference type="KEGG" id="dge:Dgeo_1327"/>
<dbReference type="eggNOG" id="COG0171">
    <property type="taxonomic scope" value="Bacteria"/>
</dbReference>
<dbReference type="HOGENOM" id="CLU_059327_3_0_0"/>
<dbReference type="UniPathway" id="UPA00253">
    <property type="reaction ID" value="UER00333"/>
</dbReference>
<dbReference type="Proteomes" id="UP000002431">
    <property type="component" value="Chromosome"/>
</dbReference>
<dbReference type="GO" id="GO:0005737">
    <property type="term" value="C:cytoplasm"/>
    <property type="evidence" value="ECO:0007669"/>
    <property type="project" value="InterPro"/>
</dbReference>
<dbReference type="GO" id="GO:0005524">
    <property type="term" value="F:ATP binding"/>
    <property type="evidence" value="ECO:0007669"/>
    <property type="project" value="UniProtKB-UniRule"/>
</dbReference>
<dbReference type="GO" id="GO:0004359">
    <property type="term" value="F:glutaminase activity"/>
    <property type="evidence" value="ECO:0007669"/>
    <property type="project" value="InterPro"/>
</dbReference>
<dbReference type="GO" id="GO:0046872">
    <property type="term" value="F:metal ion binding"/>
    <property type="evidence" value="ECO:0007669"/>
    <property type="project" value="UniProtKB-KW"/>
</dbReference>
<dbReference type="GO" id="GO:0003952">
    <property type="term" value="F:NAD+ synthase (glutamine-hydrolyzing) activity"/>
    <property type="evidence" value="ECO:0007669"/>
    <property type="project" value="InterPro"/>
</dbReference>
<dbReference type="GO" id="GO:0008795">
    <property type="term" value="F:NAD+ synthase activity"/>
    <property type="evidence" value="ECO:0007669"/>
    <property type="project" value="UniProtKB-UniRule"/>
</dbReference>
<dbReference type="GO" id="GO:0009435">
    <property type="term" value="P:NAD biosynthetic process"/>
    <property type="evidence" value="ECO:0007669"/>
    <property type="project" value="UniProtKB-UniRule"/>
</dbReference>
<dbReference type="CDD" id="cd00553">
    <property type="entry name" value="NAD_synthase"/>
    <property type="match status" value="1"/>
</dbReference>
<dbReference type="FunFam" id="3.40.50.620:FF:000015">
    <property type="entry name" value="NH(3)-dependent NAD(+) synthetase"/>
    <property type="match status" value="1"/>
</dbReference>
<dbReference type="Gene3D" id="3.40.50.620">
    <property type="entry name" value="HUPs"/>
    <property type="match status" value="1"/>
</dbReference>
<dbReference type="HAMAP" id="MF_00193">
    <property type="entry name" value="NadE_ammonia_dep"/>
    <property type="match status" value="1"/>
</dbReference>
<dbReference type="InterPro" id="IPR022310">
    <property type="entry name" value="NAD/GMP_synthase"/>
</dbReference>
<dbReference type="InterPro" id="IPR003694">
    <property type="entry name" value="NAD_synthase"/>
</dbReference>
<dbReference type="InterPro" id="IPR022926">
    <property type="entry name" value="NH(3)-dep_NAD(+)_synth"/>
</dbReference>
<dbReference type="InterPro" id="IPR014729">
    <property type="entry name" value="Rossmann-like_a/b/a_fold"/>
</dbReference>
<dbReference type="NCBIfam" id="TIGR00552">
    <property type="entry name" value="nadE"/>
    <property type="match status" value="1"/>
</dbReference>
<dbReference type="NCBIfam" id="NF001979">
    <property type="entry name" value="PRK00768.1"/>
    <property type="match status" value="1"/>
</dbReference>
<dbReference type="PANTHER" id="PTHR23090">
    <property type="entry name" value="NH 3 /GLUTAMINE-DEPENDENT NAD + SYNTHETASE"/>
    <property type="match status" value="1"/>
</dbReference>
<dbReference type="PANTHER" id="PTHR23090:SF7">
    <property type="entry name" value="NH(3)-DEPENDENT NAD(+) SYNTHETASE"/>
    <property type="match status" value="1"/>
</dbReference>
<dbReference type="Pfam" id="PF02540">
    <property type="entry name" value="NAD_synthase"/>
    <property type="match status" value="1"/>
</dbReference>
<dbReference type="SUPFAM" id="SSF52402">
    <property type="entry name" value="Adenine nucleotide alpha hydrolases-like"/>
    <property type="match status" value="1"/>
</dbReference>
<sequence length="288" mass="31320">MLTLRDRIRQELHVRPEIDPGAEVERRVAFLAKYLQHTPARGFVLGISGGQDSTLAGRLSQLAAERVRAEGGDATFFAVRLPYGVQADEADAQTALGFIRPDRTLTVNIKAAVDASARAVAEALGTGLHNAPQPETTPHDPLRDFVRGNIKARERMVAQYAIAGQENLLVVGTDHAAEALTGFFTKYGDGGVDLTPLTGLTKRQGAQLLAFLGAPESTWRKVPTADLEDDRPGLPDEVALGVTYAQIDAYLEGRAVSPEVAARLERLYLATRHKRALPVTPFDHWWQA</sequence>
<protein>
    <recommendedName>
        <fullName evidence="1">NH(3)-dependent NAD(+) synthetase</fullName>
        <ecNumber evidence="1">6.3.1.5</ecNumber>
    </recommendedName>
</protein>
<feature type="chain" id="PRO_1000077548" description="NH(3)-dependent NAD(+) synthetase">
    <location>
        <begin position="1"/>
        <end position="288"/>
    </location>
</feature>
<feature type="binding site" evidence="1">
    <location>
        <begin position="46"/>
        <end position="53"/>
    </location>
    <ligand>
        <name>ATP</name>
        <dbReference type="ChEBI" id="CHEBI:30616"/>
    </ligand>
</feature>
<feature type="binding site" evidence="1">
    <location>
        <position position="52"/>
    </location>
    <ligand>
        <name>Mg(2+)</name>
        <dbReference type="ChEBI" id="CHEBI:18420"/>
    </ligand>
</feature>
<feature type="binding site" evidence="1">
    <location>
        <position position="153"/>
    </location>
    <ligand>
        <name>deamido-NAD(+)</name>
        <dbReference type="ChEBI" id="CHEBI:58437"/>
    </ligand>
</feature>
<feature type="binding site" evidence="1">
    <location>
        <position position="173"/>
    </location>
    <ligand>
        <name>ATP</name>
        <dbReference type="ChEBI" id="CHEBI:30616"/>
    </ligand>
</feature>
<feature type="binding site" evidence="1">
    <location>
        <position position="178"/>
    </location>
    <ligand>
        <name>Mg(2+)</name>
        <dbReference type="ChEBI" id="CHEBI:18420"/>
    </ligand>
</feature>
<feature type="binding site" evidence="1">
    <location>
        <position position="186"/>
    </location>
    <ligand>
        <name>deamido-NAD(+)</name>
        <dbReference type="ChEBI" id="CHEBI:58437"/>
    </ligand>
</feature>
<feature type="binding site" evidence="1">
    <location>
        <position position="193"/>
    </location>
    <ligand>
        <name>deamido-NAD(+)</name>
        <dbReference type="ChEBI" id="CHEBI:58437"/>
    </ligand>
</feature>
<feature type="binding site" evidence="1">
    <location>
        <position position="202"/>
    </location>
    <ligand>
        <name>ATP</name>
        <dbReference type="ChEBI" id="CHEBI:30616"/>
    </ligand>
</feature>
<feature type="binding site" evidence="1">
    <location>
        <position position="224"/>
    </location>
    <ligand>
        <name>ATP</name>
        <dbReference type="ChEBI" id="CHEBI:30616"/>
    </ligand>
</feature>
<feature type="binding site" evidence="1">
    <location>
        <begin position="273"/>
        <end position="274"/>
    </location>
    <ligand>
        <name>deamido-NAD(+)</name>
        <dbReference type="ChEBI" id="CHEBI:58437"/>
    </ligand>
</feature>
<organism>
    <name type="scientific">Deinococcus geothermalis (strain DSM 11300 / CIP 105573 / AG-3a)</name>
    <dbReference type="NCBI Taxonomy" id="319795"/>
    <lineage>
        <taxon>Bacteria</taxon>
        <taxon>Thermotogati</taxon>
        <taxon>Deinococcota</taxon>
        <taxon>Deinococci</taxon>
        <taxon>Deinococcales</taxon>
        <taxon>Deinococcaceae</taxon>
        <taxon>Deinococcus</taxon>
    </lineage>
</organism>
<gene>
    <name evidence="1" type="primary">nadE</name>
    <name type="ordered locus">Dgeo_1327</name>
</gene>
<proteinExistence type="inferred from homology"/>